<organism>
    <name type="scientific">Methanosphaera stadtmanae (strain ATCC 43021 / DSM 3091 / JCM 11832 / MCB-3)</name>
    <dbReference type="NCBI Taxonomy" id="339860"/>
    <lineage>
        <taxon>Archaea</taxon>
        <taxon>Methanobacteriati</taxon>
        <taxon>Methanobacteriota</taxon>
        <taxon>Methanomada group</taxon>
        <taxon>Methanobacteria</taxon>
        <taxon>Methanobacteriales</taxon>
        <taxon>Methanobacteriaceae</taxon>
        <taxon>Methanosphaera</taxon>
    </lineage>
</organism>
<sequence>MVGINVKQPEKECHDPNCPFHGELSVRGQVIEGTVTSDKADRTITVERSFYKYINKFERYEKRNSKIKAHKPDCLDVKVGDSVKIAECRQLSKTKHFVLVEVKEGE</sequence>
<accession>Q2NFW6</accession>
<reference key="1">
    <citation type="journal article" date="2006" name="J. Bacteriol.">
        <title>The genome sequence of Methanosphaera stadtmanae reveals why this human intestinal archaeon is restricted to methanol and H2 for methane formation and ATP synthesis.</title>
        <authorList>
            <person name="Fricke W.F."/>
            <person name="Seedorf H."/>
            <person name="Henne A."/>
            <person name="Kruer M."/>
            <person name="Liesegang H."/>
            <person name="Hedderich R."/>
            <person name="Gottschalk G."/>
            <person name="Thauer R.K."/>
        </authorList>
    </citation>
    <scope>NUCLEOTIDE SEQUENCE [LARGE SCALE GENOMIC DNA]</scope>
    <source>
        <strain>ATCC 43021 / DSM 3091 / JCM 11832 / MCB-3</strain>
    </source>
</reference>
<gene>
    <name evidence="1" type="primary">rps17</name>
    <name type="ordered locus">Msp_0899</name>
</gene>
<name>RS17_METST</name>
<feature type="chain" id="PRO_0000233623" description="Small ribosomal subunit protein uS17">
    <location>
        <begin position="1"/>
        <end position="106"/>
    </location>
</feature>
<comment type="function">
    <text evidence="1">One of the primary rRNA binding proteins, it binds specifically to the 5'-end of 16S ribosomal RNA.</text>
</comment>
<comment type="subunit">
    <text evidence="1">Part of the 30S ribosomal subunit.</text>
</comment>
<comment type="similarity">
    <text evidence="1">Belongs to the universal ribosomal protein uS17 family.</text>
</comment>
<keyword id="KW-1185">Reference proteome</keyword>
<keyword id="KW-0687">Ribonucleoprotein</keyword>
<keyword id="KW-0689">Ribosomal protein</keyword>
<keyword id="KW-0694">RNA-binding</keyword>
<keyword id="KW-0699">rRNA-binding</keyword>
<dbReference type="EMBL" id="CP000102">
    <property type="protein sequence ID" value="ABC57287.1"/>
    <property type="molecule type" value="Genomic_DNA"/>
</dbReference>
<dbReference type="RefSeq" id="WP_011406486.1">
    <property type="nucleotide sequence ID" value="NC_007681.1"/>
</dbReference>
<dbReference type="SMR" id="Q2NFW6"/>
<dbReference type="STRING" id="339860.Msp_0899"/>
<dbReference type="KEGG" id="mst:Msp_0899"/>
<dbReference type="eggNOG" id="arCOG04096">
    <property type="taxonomic scope" value="Archaea"/>
</dbReference>
<dbReference type="HOGENOM" id="CLU_073626_0_3_2"/>
<dbReference type="OrthoDB" id="10698at2157"/>
<dbReference type="Proteomes" id="UP000001931">
    <property type="component" value="Chromosome"/>
</dbReference>
<dbReference type="GO" id="GO:0022627">
    <property type="term" value="C:cytosolic small ribosomal subunit"/>
    <property type="evidence" value="ECO:0007669"/>
    <property type="project" value="TreeGrafter"/>
</dbReference>
<dbReference type="GO" id="GO:0019843">
    <property type="term" value="F:rRNA binding"/>
    <property type="evidence" value="ECO:0007669"/>
    <property type="project" value="UniProtKB-UniRule"/>
</dbReference>
<dbReference type="GO" id="GO:0003735">
    <property type="term" value="F:structural constituent of ribosome"/>
    <property type="evidence" value="ECO:0007669"/>
    <property type="project" value="InterPro"/>
</dbReference>
<dbReference type="GO" id="GO:0006412">
    <property type="term" value="P:translation"/>
    <property type="evidence" value="ECO:0007669"/>
    <property type="project" value="UniProtKB-UniRule"/>
</dbReference>
<dbReference type="CDD" id="cd00364">
    <property type="entry name" value="Ribosomal_uS17"/>
    <property type="match status" value="1"/>
</dbReference>
<dbReference type="Gene3D" id="2.40.50.1000">
    <property type="match status" value="1"/>
</dbReference>
<dbReference type="HAMAP" id="MF_01345_A">
    <property type="entry name" value="Ribosomal_uS17_A"/>
    <property type="match status" value="1"/>
</dbReference>
<dbReference type="InterPro" id="IPR012340">
    <property type="entry name" value="NA-bd_OB-fold"/>
</dbReference>
<dbReference type="InterPro" id="IPR000266">
    <property type="entry name" value="Ribosomal_uS17"/>
</dbReference>
<dbReference type="InterPro" id="IPR028333">
    <property type="entry name" value="Ribosomal_uS17_arc/euk"/>
</dbReference>
<dbReference type="InterPro" id="IPR019978">
    <property type="entry name" value="Ribosomal_uS17_archaeal"/>
</dbReference>
<dbReference type="NCBIfam" id="NF006345">
    <property type="entry name" value="PRK08572.1"/>
    <property type="match status" value="1"/>
</dbReference>
<dbReference type="NCBIfam" id="TIGR03630">
    <property type="entry name" value="uS17_arch"/>
    <property type="match status" value="1"/>
</dbReference>
<dbReference type="PANTHER" id="PTHR10744">
    <property type="entry name" value="40S RIBOSOMAL PROTEIN S11 FAMILY MEMBER"/>
    <property type="match status" value="1"/>
</dbReference>
<dbReference type="PANTHER" id="PTHR10744:SF9">
    <property type="entry name" value="40S RIBOSOMAL PROTEIN S11-RELATED"/>
    <property type="match status" value="1"/>
</dbReference>
<dbReference type="Pfam" id="PF00366">
    <property type="entry name" value="Ribosomal_S17"/>
    <property type="match status" value="1"/>
</dbReference>
<dbReference type="PRINTS" id="PR00973">
    <property type="entry name" value="RIBOSOMALS17"/>
</dbReference>
<dbReference type="SUPFAM" id="SSF50249">
    <property type="entry name" value="Nucleic acid-binding proteins"/>
    <property type="match status" value="1"/>
</dbReference>
<protein>
    <recommendedName>
        <fullName evidence="1">Small ribosomal subunit protein uS17</fullName>
    </recommendedName>
    <alternativeName>
        <fullName evidence="2">30S ribosomal protein S17</fullName>
    </alternativeName>
</protein>
<evidence type="ECO:0000255" key="1">
    <source>
        <dbReference type="HAMAP-Rule" id="MF_01345"/>
    </source>
</evidence>
<evidence type="ECO:0000305" key="2"/>
<proteinExistence type="inferred from homology"/>